<accession>Q7A2S8</accession>
<comment type="function">
    <text evidence="1">Catalyzes the conversion of heme O to heme A by two successive hydroxylations of the methyl group at C8. The first hydroxylation forms heme I, the second hydroxylation results in an unstable dihydroxymethyl group, which spontaneously dehydrates, resulting in the formyl group of heme A.</text>
</comment>
<comment type="catalytic activity">
    <reaction evidence="1">
        <text>Fe(II)-heme o + 2 A + H2O = Fe(II)-heme a + 2 AH2</text>
        <dbReference type="Rhea" id="RHEA:63388"/>
        <dbReference type="ChEBI" id="CHEBI:13193"/>
        <dbReference type="ChEBI" id="CHEBI:15377"/>
        <dbReference type="ChEBI" id="CHEBI:17499"/>
        <dbReference type="ChEBI" id="CHEBI:60530"/>
        <dbReference type="ChEBI" id="CHEBI:61715"/>
        <dbReference type="EC" id="1.17.99.9"/>
    </reaction>
    <physiologicalReaction direction="left-to-right" evidence="1">
        <dbReference type="Rhea" id="RHEA:63389"/>
    </physiologicalReaction>
</comment>
<comment type="cofactor">
    <cofactor evidence="1">
        <name>heme b</name>
        <dbReference type="ChEBI" id="CHEBI:60344"/>
    </cofactor>
</comment>
<comment type="pathway">
    <text evidence="1">Porphyrin-containing compound metabolism; heme A biosynthesis; heme A from heme O: step 1/1.</text>
</comment>
<comment type="subunit">
    <text evidence="1">Interacts with CtaB.</text>
</comment>
<comment type="subcellular location">
    <subcellularLocation>
        <location evidence="1">Cell membrane</location>
        <topology evidence="1">Multi-pass membrane protein</topology>
    </subcellularLocation>
</comment>
<comment type="domain">
    <text evidence="1">The N-half (TM1-TM4) and C-half (TM5-TM8) domains are connected by an intracellular loop. Each domain is formed from four-helix bundles and they align in a pseudo twofold symmetry manner. The N-half domain is the substrate-heme O binding domain and the C-half domain is the cofactor heme B binding domain.</text>
</comment>
<comment type="domain">
    <text evidence="1">The cysteines of disulfide bond Cys-37 and Cys-44 may be involved in transfer of reducing equivalents from quinol in the membrane to the active site of the enzyme.</text>
</comment>
<comment type="similarity">
    <text evidence="1">Belongs to the COX15/CtaA family. Type 1 subfamily.</text>
</comment>
<feature type="chain" id="PRO_0000348994" description="Heme A synthase">
    <location>
        <begin position="1"/>
        <end position="303"/>
    </location>
</feature>
<feature type="topological domain" description="Cytoplasmic" evidence="1">
    <location>
        <begin position="1"/>
        <end position="8"/>
    </location>
</feature>
<feature type="transmembrane region" description="Helical" evidence="1">
    <location>
        <begin position="9"/>
        <end position="29"/>
    </location>
</feature>
<feature type="topological domain" description="Extracellular" evidence="1">
    <location>
        <begin position="30"/>
        <end position="67"/>
    </location>
</feature>
<feature type="transmembrane region" description="Helical" evidence="1">
    <location>
        <begin position="68"/>
        <end position="88"/>
    </location>
</feature>
<feature type="topological domain" description="Cytoplasmic" evidence="1">
    <location>
        <begin position="89"/>
        <end position="93"/>
    </location>
</feature>
<feature type="transmembrane region" description="Helical" evidence="1">
    <location>
        <begin position="94"/>
        <end position="114"/>
    </location>
</feature>
<feature type="topological domain" description="Extracellular" evidence="1">
    <location>
        <begin position="115"/>
        <end position="125"/>
    </location>
</feature>
<feature type="transmembrane region" description="Helical" evidence="1">
    <location>
        <begin position="126"/>
        <end position="146"/>
    </location>
</feature>
<feature type="topological domain" description="Cytoplasmic" evidence="1">
    <location>
        <begin position="147"/>
        <end position="163"/>
    </location>
</feature>
<feature type="transmembrane region" description="Helical" evidence="1">
    <location>
        <begin position="164"/>
        <end position="184"/>
    </location>
</feature>
<feature type="topological domain" description="Extracellular" evidence="1">
    <location>
        <begin position="185"/>
        <end position="215"/>
    </location>
</feature>
<feature type="transmembrane region" description="Helical" evidence="1">
    <location>
        <begin position="216"/>
        <end position="236"/>
    </location>
</feature>
<feature type="topological domain" description="Cytoplasmic" evidence="1">
    <location>
        <begin position="237"/>
        <end position="244"/>
    </location>
</feature>
<feature type="transmembrane region" description="Helical" evidence="1">
    <location>
        <begin position="245"/>
        <end position="265"/>
    </location>
</feature>
<feature type="topological domain" description="Extracellular" evidence="1">
    <location>
        <begin position="266"/>
        <end position="270"/>
    </location>
</feature>
<feature type="transmembrane region" description="Helical" evidence="1">
    <location>
        <begin position="271"/>
        <end position="291"/>
    </location>
</feature>
<feature type="topological domain" description="Cytoplasmic" evidence="1">
    <location>
        <begin position="292"/>
        <end position="303"/>
    </location>
</feature>
<feature type="active site" evidence="1">
    <location>
        <position position="60"/>
    </location>
</feature>
<feature type="binding site" description="axial binding residue" evidence="1">
    <location>
        <position position="63"/>
    </location>
    <ligand>
        <name>heme o</name>
        <dbReference type="ChEBI" id="CHEBI:24480"/>
    </ligand>
    <ligandPart>
        <name>Fe</name>
        <dbReference type="ChEBI" id="CHEBI:18248"/>
    </ligandPart>
</feature>
<feature type="binding site" description="axial binding residue" evidence="1">
    <location>
        <position position="125"/>
    </location>
    <ligand>
        <name>heme o</name>
        <dbReference type="ChEBI" id="CHEBI:24480"/>
    </ligand>
    <ligandPart>
        <name>Fe</name>
        <dbReference type="ChEBI" id="CHEBI:18248"/>
    </ligandPart>
</feature>
<feature type="binding site" description="axial binding residue" evidence="1">
    <location>
        <position position="214"/>
    </location>
    <ligand>
        <name>heme b</name>
        <dbReference type="ChEBI" id="CHEBI:60344"/>
    </ligand>
    <ligandPart>
        <name>Fe</name>
        <dbReference type="ChEBI" id="CHEBI:18248"/>
    </ligandPart>
</feature>
<feature type="binding site" description="axial binding residue" evidence="1">
    <location>
        <position position="276"/>
    </location>
    <ligand>
        <name>heme b</name>
        <dbReference type="ChEBI" id="CHEBI:60344"/>
    </ligand>
    <ligandPart>
        <name>Fe</name>
        <dbReference type="ChEBI" id="CHEBI:18248"/>
    </ligandPart>
</feature>
<feature type="disulfide bond" description="Essential for catalytic activity" evidence="1">
    <location>
        <begin position="37"/>
        <end position="44"/>
    </location>
</feature>
<sequence length="303" mass="34060">MFGKKNLKWLGVVATLMMTFVQLGGALVTKTGSADGCGSSWPLCHGALIPEFFPIDTIIELSHRAVSALSLLMVLWLVITAWKHIGYIKEIKPLSIISVGFLLLQALIGAAAVIWQQNDYVLALHFGISLISFSSVFLITLIIFSIDQKYEADELYIKKPLRRLTWLMAIIIYCGVYTGALVRHADASLAYGGWPLPFHDLVPHSEQDWVQLTHRIMAFIVFTIIMITYIHAVKNYPNNRTVHYGYTAAFILVILQVITGALSIMTNVNLIIALFHALFITYLFGMTTYFIMLMLRSVRSDKQ</sequence>
<dbReference type="EC" id="1.17.99.9" evidence="1"/>
<dbReference type="EMBL" id="BA000017">
    <property type="protein sequence ID" value="BAB57277.1"/>
    <property type="molecule type" value="Genomic_DNA"/>
</dbReference>
<dbReference type="RefSeq" id="WP_000467123.1">
    <property type="nucleotide sequence ID" value="NC_002758.2"/>
</dbReference>
<dbReference type="SMR" id="Q7A2S8"/>
<dbReference type="KEGG" id="sav:SAV1115"/>
<dbReference type="HOGENOM" id="CLU_041525_3_1_9"/>
<dbReference type="PhylomeDB" id="Q7A2S8"/>
<dbReference type="UniPathway" id="UPA00269">
    <property type="reaction ID" value="UER00713"/>
</dbReference>
<dbReference type="Proteomes" id="UP000002481">
    <property type="component" value="Chromosome"/>
</dbReference>
<dbReference type="GO" id="GO:0005886">
    <property type="term" value="C:plasma membrane"/>
    <property type="evidence" value="ECO:0007669"/>
    <property type="project" value="UniProtKB-SubCell"/>
</dbReference>
<dbReference type="GO" id="GO:0046872">
    <property type="term" value="F:metal ion binding"/>
    <property type="evidence" value="ECO:0007669"/>
    <property type="project" value="UniProtKB-KW"/>
</dbReference>
<dbReference type="GO" id="GO:0016653">
    <property type="term" value="F:oxidoreductase activity, acting on NAD(P)H, heme protein as acceptor"/>
    <property type="evidence" value="ECO:0007669"/>
    <property type="project" value="InterPro"/>
</dbReference>
<dbReference type="GO" id="GO:0006784">
    <property type="term" value="P:heme A biosynthetic process"/>
    <property type="evidence" value="ECO:0007669"/>
    <property type="project" value="UniProtKB-UniRule"/>
</dbReference>
<dbReference type="HAMAP" id="MF_01664">
    <property type="entry name" value="HemeA_synth_type1"/>
    <property type="match status" value="1"/>
</dbReference>
<dbReference type="InterPro" id="IPR003780">
    <property type="entry name" value="COX15/CtaA_fam"/>
</dbReference>
<dbReference type="InterPro" id="IPR050450">
    <property type="entry name" value="COX15/CtaA_HemeA_synthase"/>
</dbReference>
<dbReference type="InterPro" id="IPR023755">
    <property type="entry name" value="HemeA_Synthase_type1"/>
</dbReference>
<dbReference type="PANTHER" id="PTHR35457">
    <property type="entry name" value="HEME A SYNTHASE"/>
    <property type="match status" value="1"/>
</dbReference>
<dbReference type="PANTHER" id="PTHR35457:SF1">
    <property type="entry name" value="HEME A SYNTHASE"/>
    <property type="match status" value="1"/>
</dbReference>
<dbReference type="Pfam" id="PF02628">
    <property type="entry name" value="COX15-CtaA"/>
    <property type="match status" value="1"/>
</dbReference>
<name>CTAA_STAAM</name>
<keyword id="KW-1003">Cell membrane</keyword>
<keyword id="KW-1015">Disulfide bond</keyword>
<keyword id="KW-0350">Heme biosynthesis</keyword>
<keyword id="KW-0408">Iron</keyword>
<keyword id="KW-0472">Membrane</keyword>
<keyword id="KW-0479">Metal-binding</keyword>
<keyword id="KW-0560">Oxidoreductase</keyword>
<keyword id="KW-0812">Transmembrane</keyword>
<keyword id="KW-1133">Transmembrane helix</keyword>
<reference key="1">
    <citation type="journal article" date="2001" name="Lancet">
        <title>Whole genome sequencing of meticillin-resistant Staphylococcus aureus.</title>
        <authorList>
            <person name="Kuroda M."/>
            <person name="Ohta T."/>
            <person name="Uchiyama I."/>
            <person name="Baba T."/>
            <person name="Yuzawa H."/>
            <person name="Kobayashi I."/>
            <person name="Cui L."/>
            <person name="Oguchi A."/>
            <person name="Aoki K."/>
            <person name="Nagai Y."/>
            <person name="Lian J.-Q."/>
            <person name="Ito T."/>
            <person name="Kanamori M."/>
            <person name="Matsumaru H."/>
            <person name="Maruyama A."/>
            <person name="Murakami H."/>
            <person name="Hosoyama A."/>
            <person name="Mizutani-Ui Y."/>
            <person name="Takahashi N.K."/>
            <person name="Sawano T."/>
            <person name="Inoue R."/>
            <person name="Kaito C."/>
            <person name="Sekimizu K."/>
            <person name="Hirakawa H."/>
            <person name="Kuhara S."/>
            <person name="Goto S."/>
            <person name="Yabuzaki J."/>
            <person name="Kanehisa M."/>
            <person name="Yamashita A."/>
            <person name="Oshima K."/>
            <person name="Furuya K."/>
            <person name="Yoshino C."/>
            <person name="Shiba T."/>
            <person name="Hattori M."/>
            <person name="Ogasawara N."/>
            <person name="Hayashi H."/>
            <person name="Hiramatsu K."/>
        </authorList>
    </citation>
    <scope>NUCLEOTIDE SEQUENCE [LARGE SCALE GENOMIC DNA]</scope>
    <source>
        <strain>Mu50 / ATCC 700699</strain>
    </source>
</reference>
<proteinExistence type="inferred from homology"/>
<gene>
    <name evidence="1" type="primary">ctaA</name>
    <name type="ordered locus">SAV1115</name>
</gene>
<protein>
    <recommendedName>
        <fullName evidence="1">Heme A synthase</fullName>
        <shortName evidence="1">HAS</shortName>
        <ecNumber evidence="1">1.17.99.9</ecNumber>
    </recommendedName>
    <alternativeName>
        <fullName evidence="1">Cytochrome aa3-controlling protein</fullName>
    </alternativeName>
</protein>
<evidence type="ECO:0000255" key="1">
    <source>
        <dbReference type="HAMAP-Rule" id="MF_01664"/>
    </source>
</evidence>
<organism>
    <name type="scientific">Staphylococcus aureus (strain Mu50 / ATCC 700699)</name>
    <dbReference type="NCBI Taxonomy" id="158878"/>
    <lineage>
        <taxon>Bacteria</taxon>
        <taxon>Bacillati</taxon>
        <taxon>Bacillota</taxon>
        <taxon>Bacilli</taxon>
        <taxon>Bacillales</taxon>
        <taxon>Staphylococcaceae</taxon>
        <taxon>Staphylococcus</taxon>
    </lineage>
</organism>